<proteinExistence type="evidence at protein level"/>
<name>BGBP2_GALME</name>
<dbReference type="InParanoid" id="C0HLY6"/>
<dbReference type="Proteomes" id="UP000504614">
    <property type="component" value="Unplaced"/>
</dbReference>
<dbReference type="GO" id="GO:0005576">
    <property type="term" value="C:extracellular region"/>
    <property type="evidence" value="ECO:0007669"/>
    <property type="project" value="UniProtKB-SubCell"/>
</dbReference>
<dbReference type="GO" id="GO:0045087">
    <property type="term" value="P:innate immune response"/>
    <property type="evidence" value="ECO:0007669"/>
    <property type="project" value="UniProtKB-KW"/>
</dbReference>
<reference evidence="4" key="1">
    <citation type="journal article" date="2021" name="Molecules">
        <title>Fungal alpha-1,3-Glucan as a New Pathogen-Associated Molecular Pattern in the Insect Model Host Galleria mellonella.</title>
        <authorList>
            <person name="Staczek S."/>
            <person name="Zdybicka-Barabas A."/>
            <person name="Wojda I."/>
            <person name="Wiater A."/>
            <person name="Mak P."/>
            <person name="Suder P."/>
            <person name="Skrzypiec K."/>
            <person name="Cytrynska M."/>
        </authorList>
    </citation>
    <scope>PROTEIN SEQUENCE</scope>
    <scope>FUNCTION</scope>
    <scope>SUBCELLULAR LOCATION</scope>
    <scope>DEVELOPMENTAL STAGE</scope>
</reference>
<sequence length="20" mass="2188">YVVPAAKLEAIYPKGLRVSI</sequence>
<organism>
    <name type="scientific">Galleria mellonella</name>
    <name type="common">Greater wax moth</name>
    <dbReference type="NCBI Taxonomy" id="7137"/>
    <lineage>
        <taxon>Eukaryota</taxon>
        <taxon>Metazoa</taxon>
        <taxon>Ecdysozoa</taxon>
        <taxon>Arthropoda</taxon>
        <taxon>Hexapoda</taxon>
        <taxon>Insecta</taxon>
        <taxon>Pterygota</taxon>
        <taxon>Neoptera</taxon>
        <taxon>Endopterygota</taxon>
        <taxon>Lepidoptera</taxon>
        <taxon>Glossata</taxon>
        <taxon>Ditrysia</taxon>
        <taxon>Pyraloidea</taxon>
        <taxon>Pyralidae</taxon>
        <taxon>Galleriinae</taxon>
        <taxon>Galleria</taxon>
    </lineage>
</organism>
<feature type="chain" id="PRO_0000455047" description="Beta-1,3-glucan-binding protein 2">
    <location>
        <begin position="1" status="less than"/>
        <end position="20" status="greater than"/>
    </location>
</feature>
<feature type="non-terminal residue" evidence="3">
    <location>
        <position position="1"/>
    </location>
</feature>
<feature type="non-terminal residue" evidence="3">
    <location>
        <position position="20"/>
    </location>
</feature>
<protein>
    <recommendedName>
        <fullName evidence="3">Beta-1,3-glucan-binding protein 2</fullName>
        <shortName evidence="4">BGBP</shortName>
    </recommendedName>
    <alternativeName>
        <fullName evidence="1">Beta-1,3-glucan recognition protein</fullName>
        <shortName evidence="1">BetaGRP</shortName>
    </alternativeName>
</protein>
<keyword id="KW-0903">Direct protein sequencing</keyword>
<keyword id="KW-0391">Immunity</keyword>
<keyword id="KW-0399">Innate immunity</keyword>
<keyword id="KW-1185">Reference proteome</keyword>
<keyword id="KW-0964">Secreted</keyword>
<comment type="function">
    <text evidence="1 2">Involved in the recognition of invading microorganisms causing their aggregation (By similarity). Activates the phenoloxidase cascade (By similarity). Binds specifically to beta-1,3-glucan (By similarity). Binds the A.niger cell wall component alpha-1,3-glucan, a fungal pathogen-associated molecular pattern (PAMP) that activates the host immune response (PubMed:34443685).</text>
</comment>
<comment type="subunit">
    <text evidence="1">Monomer.</text>
</comment>
<comment type="subcellular location">
    <subcellularLocation>
        <location evidence="2">Secreted</location>
    </subcellularLocation>
    <text evidence="2">Secreted in the hemolymph.</text>
</comment>
<comment type="developmental stage">
    <text evidence="2">Expressed in last instar larvae.</text>
</comment>
<comment type="similarity">
    <text evidence="4">Belongs to the insect beta-1,3-glucan binding protein family.</text>
</comment>
<accession>C0HLY6</accession>
<evidence type="ECO:0000250" key="1">
    <source>
        <dbReference type="UniProtKB" id="Q8MU95"/>
    </source>
</evidence>
<evidence type="ECO:0000269" key="2">
    <source>
    </source>
</evidence>
<evidence type="ECO:0000303" key="3">
    <source>
    </source>
</evidence>
<evidence type="ECO:0000305" key="4"/>